<keyword id="KW-1003">Cell membrane</keyword>
<keyword id="KW-0168">Coated pit</keyword>
<keyword id="KW-0254">Endocytosis</keyword>
<keyword id="KW-0446">Lipid-binding</keyword>
<keyword id="KW-0472">Membrane</keyword>
<keyword id="KW-0597">Phosphoprotein</keyword>
<keyword id="KW-0653">Protein transport</keyword>
<keyword id="KW-1185">Reference proteome</keyword>
<keyword id="KW-0813">Transport</keyword>
<feature type="chain" id="PRO_0000284130" description="AP-2 complex subunit mu">
    <location>
        <begin position="1"/>
        <end position="435"/>
    </location>
</feature>
<feature type="domain" description="MHD" evidence="5">
    <location>
        <begin position="170"/>
        <end position="434"/>
    </location>
</feature>
<feature type="binding site" evidence="3">
    <location>
        <position position="341"/>
    </location>
    <ligand>
        <name>a 1,2-diacyl-sn-glycero-3-phospho-(1D-myo-inositol-3,4,5-trisphosphate)</name>
        <dbReference type="ChEBI" id="CHEBI:57836"/>
    </ligand>
</feature>
<feature type="binding site" evidence="3">
    <location>
        <position position="345"/>
    </location>
    <ligand>
        <name>a 1,2-diacyl-sn-glycero-3-phospho-(1D-myo-inositol-3,4,5-trisphosphate)</name>
        <dbReference type="ChEBI" id="CHEBI:57836"/>
    </ligand>
</feature>
<feature type="binding site" evidence="3">
    <location>
        <position position="354"/>
    </location>
    <ligand>
        <name>a 1,2-diacyl-sn-glycero-3-phospho-(1D-myo-inositol-3,4,5-trisphosphate)</name>
        <dbReference type="ChEBI" id="CHEBI:57836"/>
    </ligand>
</feature>
<feature type="modified residue" description="Phosphoserine" evidence="4">
    <location>
        <position position="45"/>
    </location>
</feature>
<feature type="modified residue" description="Phosphothreonine" evidence="4">
    <location>
        <position position="156"/>
    </location>
</feature>
<comment type="function">
    <text evidence="3 4">Component of the adaptor protein complex 2 (AP-2). Adaptor protein complexes function in protein transport via transport vesicles in different membrane traffic pathways. Adaptor protein complexes are vesicle coat components and appear to be involved in cargo selection and vesicle formation. AP-2 is involved in clathrin-dependent endocytosis in which cargo proteins are incorporated into vesicles surrounded by clathrin (clathrin-coated vesicles, CCVs) which are destined for fusion with the early endosome. The clathrin lattice serves as a mechanical scaffold but is itself unable to bind directly to membrane components. Clathrin-associated adaptor protein (AP) complexes which can bind directly to both the clathrin lattice and to the lipid and protein components of membranes are considered to be the major clathrin adaptors contributing the CCV formation. AP-2 also serves as a cargo receptor to selectively sort the membrane proteins involved in receptor-mediated endocytosis. AP-2 seems to play a role in the recycling of synaptic vesicle membranes from the presynaptic surface (By similarity). AP-2 recognizes Y-X-X-[FILMV] (Y-X-X-Phi) and [ED]-X-X-X-L-[LI] endocytosis signal motifs within the cytosolic tails of transmembrane cargo molecules (By similarity). AP-2 may also play a role in maintaining normal post-endocytic trafficking through the ARF6-regulated, non-clathrin pathway. During long-term potentiation in hippocampal neurons, AP-2 is responsible for the endocytosis of ADAM10 (By similarity). The AP-2 mu subunit binds to transmembrane cargo proteins; it recognizes the Y-X-X-Phi motifs (By similarity). The surface region interacting with to the Y-X-X-Phi motif is inaccessible in cytosolic AP-2, but becomes accessible through a conformational change following phosphorylation of AP-2 mu subunit at Thr-156 in membrane-associated AP-2. The membrane-specific phosphorylation event appears to involve assembled clathrin which activates the AP-2 mu kinase AAK1 (By similarity). Plays a role in endocytosis of frizzled family members upon Wnt signaling (By similarity).</text>
</comment>
<comment type="subunit">
    <text evidence="1 2 4">Adaptor protein complex 2 (AP-2) is a heterotetramer composed of two large adaptins (alpha-type subunit AP2A1 or AP2A2 and beta-type subunit AP2B1), a medium adaptin (mu-type subunit AP2M1) and a small adaptin (sigma-type subunit AP2S1). Interacts with ATP6V1H and MEGF10. Interacts with EGFR. Interacts with PIP5K1C; tyrosine phosphorylation of PIP5K1C weakens the interaction. Interacts with KIAA0319; required for clathrin-mediated endocytosis of KIAA0319. Interacts with DVL2 (via DEP domain) (By similarity). Interacts with KCNQ1; mediates estrogen-induced internalization via clathrin-coated vesicles (By similarity). Together with AP2A1 or AP2A2 and AP2B1, it interacts with ADAM10; this interaction facilitates ADAM10 endocytosis from the plasma membrane during long-term potentiation in hippocampal neurons (By similarity). Probably interacts with ACE2 (via endocytic sorting signal motif); the interaction is inhibited by ACE2 phosphorylation (By similarity). Interacts with RALBP1; the interaction is direct (By similarity). Interacts with TMEM106B (via N-terminus) (By similarity).</text>
</comment>
<comment type="subcellular location">
    <subcellularLocation>
        <location evidence="4">Cell membrane</location>
    </subcellularLocation>
    <subcellularLocation>
        <location evidence="4">Membrane</location>
        <location evidence="4">Coated pit</location>
        <topology evidence="4">Peripheral membrane protein</topology>
        <orientation evidence="4">Cytoplasmic side</orientation>
    </subcellularLocation>
    <text evidence="2">AP-2 appears to be excluded from internalizing CCVs and to disengage from sites of endocytosis seconds before internalization of the nascent CCV.</text>
</comment>
<comment type="PTM">
    <text evidence="4">Phosphorylation at Thr-156 increases the affinity of the AP-2 complex for cargo membrane proteins during the initial stages of endocytosis.</text>
</comment>
<comment type="similarity">
    <text evidence="6">Belongs to the adaptor complexes medium subunit family.</text>
</comment>
<sequence>MIGGLFIYNHKGEVLIYRVYRDDIGRNAVDAFRVNVIHARQQVRSPVTNIARTSFFHVKRSNIWLAAVTKQNVDAAMVFEFLYKMCDVMAAYFGKISEENIKNNFVLIYELLDEILDFGYPQNSETGALKTFITQQGIKSQHQTKEEQSQITSQVTGQIGWRREGIKYRRNELFLDVLESVNLLMSPQGQVLSAHVSGRVVMKSYLSGMPECKFGMNDKIVIEKQGKGTADETSKSGKQSIAIDDCTFHQCVRLSKSDSERSISFIPPDGEFELMRYRTTKDIILPFRVIPLVREVGRTKLEVKVVIKSNFKPSLLAQKIEVRIPTPLNTSGVQVICMKGKAKYKASENAIVWKIKRMAGMKESQISAEIELLPTNDKKKWARPPISMNFEVPFAPSGLKVRYLKVFEPKLNYSDHDVIKWVRYIGRSGIYETRC</sequence>
<accession>Q5NVF7</accession>
<dbReference type="EMBL" id="CR926079">
    <property type="protein sequence ID" value="CAI29706.1"/>
    <property type="molecule type" value="mRNA"/>
</dbReference>
<dbReference type="SMR" id="Q5NVF7"/>
<dbReference type="STRING" id="9601.ENSPPYP00000016043"/>
<dbReference type="eggNOG" id="KOG0938">
    <property type="taxonomic scope" value="Eukaryota"/>
</dbReference>
<dbReference type="InParanoid" id="Q5NVF7"/>
<dbReference type="Proteomes" id="UP000001595">
    <property type="component" value="Unplaced"/>
</dbReference>
<dbReference type="GO" id="GO:0030131">
    <property type="term" value="C:clathrin adaptor complex"/>
    <property type="evidence" value="ECO:0007669"/>
    <property type="project" value="InterPro"/>
</dbReference>
<dbReference type="GO" id="GO:0005905">
    <property type="term" value="C:clathrin-coated pit"/>
    <property type="evidence" value="ECO:0007669"/>
    <property type="project" value="UniProtKB-KW"/>
</dbReference>
<dbReference type="GO" id="GO:0005886">
    <property type="term" value="C:plasma membrane"/>
    <property type="evidence" value="ECO:0007669"/>
    <property type="project" value="UniProtKB-SubCell"/>
</dbReference>
<dbReference type="GO" id="GO:0008289">
    <property type="term" value="F:lipid binding"/>
    <property type="evidence" value="ECO:0007669"/>
    <property type="project" value="UniProtKB-KW"/>
</dbReference>
<dbReference type="GO" id="GO:0006897">
    <property type="term" value="P:endocytosis"/>
    <property type="evidence" value="ECO:0007669"/>
    <property type="project" value="UniProtKB-KW"/>
</dbReference>
<dbReference type="GO" id="GO:0006886">
    <property type="term" value="P:intracellular protein transport"/>
    <property type="evidence" value="ECO:0007669"/>
    <property type="project" value="InterPro"/>
</dbReference>
<dbReference type="CDD" id="cd09251">
    <property type="entry name" value="AP-2_Mu2_Cterm"/>
    <property type="match status" value="1"/>
</dbReference>
<dbReference type="CDD" id="cd14836">
    <property type="entry name" value="AP2_Mu_N"/>
    <property type="match status" value="1"/>
</dbReference>
<dbReference type="FunFam" id="2.60.40.1170:FF:000008">
    <property type="entry name" value="AP-2 complex subunit mu isoform 2"/>
    <property type="match status" value="1"/>
</dbReference>
<dbReference type="FunFam" id="3.30.450.60:FF:000002">
    <property type="entry name" value="AP-2 complex subunit mu, putative"/>
    <property type="match status" value="1"/>
</dbReference>
<dbReference type="Gene3D" id="3.30.450.60">
    <property type="match status" value="1"/>
</dbReference>
<dbReference type="Gene3D" id="2.60.40.1170">
    <property type="entry name" value="Mu homology domain, subdomain B"/>
    <property type="match status" value="2"/>
</dbReference>
<dbReference type="InterPro" id="IPR050431">
    <property type="entry name" value="Adaptor_comp_med_subunit"/>
</dbReference>
<dbReference type="InterPro" id="IPR036168">
    <property type="entry name" value="AP2_Mu_C_sf"/>
</dbReference>
<dbReference type="InterPro" id="IPR043532">
    <property type="entry name" value="AP2_Mu_N"/>
</dbReference>
<dbReference type="InterPro" id="IPR022775">
    <property type="entry name" value="AP_mu_sigma_su"/>
</dbReference>
<dbReference type="InterPro" id="IPR001392">
    <property type="entry name" value="Clathrin_mu"/>
</dbReference>
<dbReference type="InterPro" id="IPR018240">
    <property type="entry name" value="Clathrin_mu_CS"/>
</dbReference>
<dbReference type="InterPro" id="IPR011012">
    <property type="entry name" value="Longin-like_dom_sf"/>
</dbReference>
<dbReference type="InterPro" id="IPR028565">
    <property type="entry name" value="MHD"/>
</dbReference>
<dbReference type="InterPro" id="IPR043512">
    <property type="entry name" value="Mu2_C"/>
</dbReference>
<dbReference type="PANTHER" id="PTHR10529">
    <property type="entry name" value="AP COMPLEX SUBUNIT MU"/>
    <property type="match status" value="1"/>
</dbReference>
<dbReference type="Pfam" id="PF00928">
    <property type="entry name" value="Adap_comp_sub"/>
    <property type="match status" value="1"/>
</dbReference>
<dbReference type="Pfam" id="PF01217">
    <property type="entry name" value="Clat_adaptor_s"/>
    <property type="match status" value="1"/>
</dbReference>
<dbReference type="PIRSF" id="PIRSF005992">
    <property type="entry name" value="Clathrin_mu"/>
    <property type="match status" value="1"/>
</dbReference>
<dbReference type="PRINTS" id="PR00314">
    <property type="entry name" value="CLATHRINADPT"/>
</dbReference>
<dbReference type="SUPFAM" id="SSF49447">
    <property type="entry name" value="Second domain of Mu2 adaptin subunit (ap50) of ap2 adaptor"/>
    <property type="match status" value="1"/>
</dbReference>
<dbReference type="SUPFAM" id="SSF64356">
    <property type="entry name" value="SNARE-like"/>
    <property type="match status" value="1"/>
</dbReference>
<dbReference type="PROSITE" id="PS00990">
    <property type="entry name" value="CLAT_ADAPTOR_M_1"/>
    <property type="match status" value="1"/>
</dbReference>
<dbReference type="PROSITE" id="PS00991">
    <property type="entry name" value="CLAT_ADAPTOR_M_2"/>
    <property type="match status" value="1"/>
</dbReference>
<dbReference type="PROSITE" id="PS51072">
    <property type="entry name" value="MHD"/>
    <property type="match status" value="1"/>
</dbReference>
<proteinExistence type="evidence at transcript level"/>
<protein>
    <recommendedName>
        <fullName>AP-2 complex subunit mu</fullName>
    </recommendedName>
    <alternativeName>
        <fullName>AP-2 mu chain</fullName>
    </alternativeName>
    <alternativeName>
        <fullName>Adaptor protein complex AP-2 subunit mu</fullName>
    </alternativeName>
    <alternativeName>
        <fullName>Adaptor-related protein complex 2 subunit mu</fullName>
    </alternativeName>
    <alternativeName>
        <fullName>Clathrin assembly protein complex 2 mu medium chain</fullName>
    </alternativeName>
    <alternativeName>
        <fullName>Clathrin coat assembly protein AP50</fullName>
    </alternativeName>
    <alternativeName>
        <fullName>Clathrin coat-associated protein AP50</fullName>
    </alternativeName>
    <alternativeName>
        <fullName>HA2 50 kDa subunit</fullName>
    </alternativeName>
    <alternativeName>
        <fullName>Mu2-adaptin</fullName>
    </alternativeName>
    <alternativeName>
        <fullName>Plasma membrane adaptor AP-2 50 kDa protein</fullName>
    </alternativeName>
</protein>
<evidence type="ECO:0000250" key="1"/>
<evidence type="ECO:0000250" key="2">
    <source>
        <dbReference type="UniProtKB" id="P84091"/>
    </source>
</evidence>
<evidence type="ECO:0000250" key="3">
    <source>
        <dbReference type="UniProtKB" id="P84092"/>
    </source>
</evidence>
<evidence type="ECO:0000250" key="4">
    <source>
        <dbReference type="UniProtKB" id="Q96CW1"/>
    </source>
</evidence>
<evidence type="ECO:0000255" key="5">
    <source>
        <dbReference type="PROSITE-ProRule" id="PRU00404"/>
    </source>
</evidence>
<evidence type="ECO:0000305" key="6"/>
<name>AP2M1_PONAB</name>
<organism>
    <name type="scientific">Pongo abelii</name>
    <name type="common">Sumatran orangutan</name>
    <name type="synonym">Pongo pygmaeus abelii</name>
    <dbReference type="NCBI Taxonomy" id="9601"/>
    <lineage>
        <taxon>Eukaryota</taxon>
        <taxon>Metazoa</taxon>
        <taxon>Chordata</taxon>
        <taxon>Craniata</taxon>
        <taxon>Vertebrata</taxon>
        <taxon>Euteleostomi</taxon>
        <taxon>Mammalia</taxon>
        <taxon>Eutheria</taxon>
        <taxon>Euarchontoglires</taxon>
        <taxon>Primates</taxon>
        <taxon>Haplorrhini</taxon>
        <taxon>Catarrhini</taxon>
        <taxon>Hominidae</taxon>
        <taxon>Pongo</taxon>
    </lineage>
</organism>
<reference key="1">
    <citation type="submission" date="2004-11" db="EMBL/GenBank/DDBJ databases">
        <authorList>
            <consortium name="The German cDNA consortium"/>
        </authorList>
    </citation>
    <scope>NUCLEOTIDE SEQUENCE [LARGE SCALE MRNA]</scope>
    <source>
        <tissue>Brain cortex</tissue>
    </source>
</reference>
<gene>
    <name type="primary">AP2M1</name>
</gene>